<organism>
    <name type="scientific">Wigglesworthia glossinidia brevipalpis</name>
    <dbReference type="NCBI Taxonomy" id="36870"/>
    <lineage>
        <taxon>Bacteria</taxon>
        <taxon>Pseudomonadati</taxon>
        <taxon>Pseudomonadota</taxon>
        <taxon>Gammaproteobacteria</taxon>
        <taxon>Enterobacterales</taxon>
        <taxon>Erwiniaceae</taxon>
        <taxon>Wigglesworthia</taxon>
    </lineage>
</organism>
<evidence type="ECO:0000255" key="1">
    <source>
        <dbReference type="HAMAP-Rule" id="MF_00051"/>
    </source>
</evidence>
<reference key="1">
    <citation type="journal article" date="2002" name="Nat. Genet.">
        <title>Genome sequence of the endocellular obligate symbiont of tsetse flies, Wigglesworthia glossinidia.</title>
        <authorList>
            <person name="Akman L."/>
            <person name="Yamashita A."/>
            <person name="Watanabe H."/>
            <person name="Oshima K."/>
            <person name="Shiba T."/>
            <person name="Hattori M."/>
            <person name="Aksoy S."/>
        </authorList>
    </citation>
    <scope>NUCLEOTIDE SEQUENCE [LARGE SCALE GENOMIC DNA]</scope>
</reference>
<sequence length="420" mass="47448">MNIYYKNFKKYDTKIYNIIKKEIIRQEEHIELIASENYASKYVMQMQGSLLTNKYAEGYPKNRYYRGCKYIDEIEDLAIKRAKKLFNVDYVNVQPHSGSQANFAVYSALLNPGDLVLGMKLNHGGHLTHGSKANFSGKMYKFISYGVNGEGKLDYNKLLNLANYYRPKMIVGGFSSYSGFINWKKMRFISDKVGAYLFADISHVAGLIVAGIYPNAIPYAHVVTTTTHKTLSGPRGGLILAKEGDDEFYKKLDSAVFPGTQGGPLMHIIAAKAVAFKEAMTLKFKKYQHQLVKNSKSMVEIFLKRKFHVVSGGTKNHLFILNLSNIGLKGDLASEILEKANITVNKNSIPNDKLNPKITSGIRIGTPAITKRGFKEIESKKVAEWICDILENINDKKLINNIKIKVINLCYKYPVYKSFK</sequence>
<name>GLYA_WIGBR</name>
<proteinExistence type="inferred from homology"/>
<keyword id="KW-0028">Amino-acid biosynthesis</keyword>
<keyword id="KW-0963">Cytoplasm</keyword>
<keyword id="KW-0554">One-carbon metabolism</keyword>
<keyword id="KW-0663">Pyridoxal phosphate</keyword>
<keyword id="KW-1185">Reference proteome</keyword>
<keyword id="KW-0808">Transferase</keyword>
<comment type="function">
    <text evidence="1">Catalyzes the reversible interconversion of serine and glycine with tetrahydrofolate (THF) serving as the one-carbon carrier. This reaction serves as the major source of one-carbon groups required for the biosynthesis of purines, thymidylate, methionine, and other important biomolecules. Also exhibits THF-independent aldolase activity toward beta-hydroxyamino acids, producing glycine and aldehydes, via a retro-aldol mechanism.</text>
</comment>
<comment type="catalytic activity">
    <reaction evidence="1">
        <text>(6R)-5,10-methylene-5,6,7,8-tetrahydrofolate + glycine + H2O = (6S)-5,6,7,8-tetrahydrofolate + L-serine</text>
        <dbReference type="Rhea" id="RHEA:15481"/>
        <dbReference type="ChEBI" id="CHEBI:15377"/>
        <dbReference type="ChEBI" id="CHEBI:15636"/>
        <dbReference type="ChEBI" id="CHEBI:33384"/>
        <dbReference type="ChEBI" id="CHEBI:57305"/>
        <dbReference type="ChEBI" id="CHEBI:57453"/>
        <dbReference type="EC" id="2.1.2.1"/>
    </reaction>
</comment>
<comment type="cofactor">
    <cofactor evidence="1">
        <name>pyridoxal 5'-phosphate</name>
        <dbReference type="ChEBI" id="CHEBI:597326"/>
    </cofactor>
</comment>
<comment type="pathway">
    <text evidence="1">One-carbon metabolism; tetrahydrofolate interconversion.</text>
</comment>
<comment type="pathway">
    <text evidence="1">Amino-acid biosynthesis; glycine biosynthesis; glycine from L-serine: step 1/1.</text>
</comment>
<comment type="subunit">
    <text evidence="1">Homodimer.</text>
</comment>
<comment type="subcellular location">
    <subcellularLocation>
        <location evidence="1">Cytoplasm</location>
    </subcellularLocation>
</comment>
<comment type="similarity">
    <text evidence="1">Belongs to the SHMT family.</text>
</comment>
<gene>
    <name evidence="1" type="primary">glyA</name>
    <name type="ordered locus">WIGBR5010</name>
</gene>
<protein>
    <recommendedName>
        <fullName evidence="1">Serine hydroxymethyltransferase</fullName>
        <shortName evidence="1">SHMT</shortName>
        <shortName evidence="1">Serine methylase</shortName>
        <ecNumber evidence="1">2.1.2.1</ecNumber>
    </recommendedName>
</protein>
<accession>Q8D253</accession>
<dbReference type="EC" id="2.1.2.1" evidence="1"/>
<dbReference type="EMBL" id="BA000021">
    <property type="protein sequence ID" value="BAC24647.1"/>
    <property type="molecule type" value="Genomic_DNA"/>
</dbReference>
<dbReference type="SMR" id="Q8D253"/>
<dbReference type="STRING" id="36870.gene:10369005"/>
<dbReference type="KEGG" id="wbr:glyA"/>
<dbReference type="eggNOG" id="COG0112">
    <property type="taxonomic scope" value="Bacteria"/>
</dbReference>
<dbReference type="HOGENOM" id="CLU_022477_2_1_6"/>
<dbReference type="OrthoDB" id="9803846at2"/>
<dbReference type="UniPathway" id="UPA00193"/>
<dbReference type="UniPathway" id="UPA00288">
    <property type="reaction ID" value="UER01023"/>
</dbReference>
<dbReference type="Proteomes" id="UP000000562">
    <property type="component" value="Chromosome"/>
</dbReference>
<dbReference type="GO" id="GO:0005829">
    <property type="term" value="C:cytosol"/>
    <property type="evidence" value="ECO:0007669"/>
    <property type="project" value="TreeGrafter"/>
</dbReference>
<dbReference type="GO" id="GO:0004372">
    <property type="term" value="F:glycine hydroxymethyltransferase activity"/>
    <property type="evidence" value="ECO:0007669"/>
    <property type="project" value="UniProtKB-UniRule"/>
</dbReference>
<dbReference type="GO" id="GO:0030170">
    <property type="term" value="F:pyridoxal phosphate binding"/>
    <property type="evidence" value="ECO:0007669"/>
    <property type="project" value="UniProtKB-UniRule"/>
</dbReference>
<dbReference type="GO" id="GO:0019264">
    <property type="term" value="P:glycine biosynthetic process from serine"/>
    <property type="evidence" value="ECO:0007669"/>
    <property type="project" value="UniProtKB-UniRule"/>
</dbReference>
<dbReference type="GO" id="GO:0035999">
    <property type="term" value="P:tetrahydrofolate interconversion"/>
    <property type="evidence" value="ECO:0007669"/>
    <property type="project" value="UniProtKB-UniRule"/>
</dbReference>
<dbReference type="CDD" id="cd00378">
    <property type="entry name" value="SHMT"/>
    <property type="match status" value="1"/>
</dbReference>
<dbReference type="FunFam" id="3.40.640.10:FF:000001">
    <property type="entry name" value="Serine hydroxymethyltransferase"/>
    <property type="match status" value="1"/>
</dbReference>
<dbReference type="Gene3D" id="3.90.1150.10">
    <property type="entry name" value="Aspartate Aminotransferase, domain 1"/>
    <property type="match status" value="1"/>
</dbReference>
<dbReference type="Gene3D" id="3.40.640.10">
    <property type="entry name" value="Type I PLP-dependent aspartate aminotransferase-like (Major domain)"/>
    <property type="match status" value="1"/>
</dbReference>
<dbReference type="HAMAP" id="MF_00051">
    <property type="entry name" value="SHMT"/>
    <property type="match status" value="1"/>
</dbReference>
<dbReference type="InterPro" id="IPR015424">
    <property type="entry name" value="PyrdxlP-dep_Trfase"/>
</dbReference>
<dbReference type="InterPro" id="IPR015421">
    <property type="entry name" value="PyrdxlP-dep_Trfase_major"/>
</dbReference>
<dbReference type="InterPro" id="IPR015422">
    <property type="entry name" value="PyrdxlP-dep_Trfase_small"/>
</dbReference>
<dbReference type="InterPro" id="IPR001085">
    <property type="entry name" value="Ser_HO-MeTrfase"/>
</dbReference>
<dbReference type="InterPro" id="IPR049943">
    <property type="entry name" value="Ser_HO-MeTrfase-like"/>
</dbReference>
<dbReference type="InterPro" id="IPR019798">
    <property type="entry name" value="Ser_HO-MeTrfase_PLP_BS"/>
</dbReference>
<dbReference type="InterPro" id="IPR039429">
    <property type="entry name" value="SHMT-like_dom"/>
</dbReference>
<dbReference type="NCBIfam" id="NF000586">
    <property type="entry name" value="PRK00011.1"/>
    <property type="match status" value="1"/>
</dbReference>
<dbReference type="PANTHER" id="PTHR11680">
    <property type="entry name" value="SERINE HYDROXYMETHYLTRANSFERASE"/>
    <property type="match status" value="1"/>
</dbReference>
<dbReference type="PANTHER" id="PTHR11680:SF50">
    <property type="entry name" value="SERINE HYDROXYMETHYLTRANSFERASE"/>
    <property type="match status" value="1"/>
</dbReference>
<dbReference type="Pfam" id="PF00464">
    <property type="entry name" value="SHMT"/>
    <property type="match status" value="1"/>
</dbReference>
<dbReference type="PIRSF" id="PIRSF000412">
    <property type="entry name" value="SHMT"/>
    <property type="match status" value="1"/>
</dbReference>
<dbReference type="SUPFAM" id="SSF53383">
    <property type="entry name" value="PLP-dependent transferases"/>
    <property type="match status" value="1"/>
</dbReference>
<dbReference type="PROSITE" id="PS00096">
    <property type="entry name" value="SHMT"/>
    <property type="match status" value="1"/>
</dbReference>
<feature type="chain" id="PRO_0000113698" description="Serine hydroxymethyltransferase">
    <location>
        <begin position="1"/>
        <end position="420"/>
    </location>
</feature>
<feature type="binding site" evidence="1">
    <location>
        <position position="121"/>
    </location>
    <ligand>
        <name>(6S)-5,6,7,8-tetrahydrofolate</name>
        <dbReference type="ChEBI" id="CHEBI:57453"/>
    </ligand>
</feature>
<feature type="binding site" evidence="1">
    <location>
        <begin position="125"/>
        <end position="127"/>
    </location>
    <ligand>
        <name>(6S)-5,6,7,8-tetrahydrofolate</name>
        <dbReference type="ChEBI" id="CHEBI:57453"/>
    </ligand>
</feature>
<feature type="site" description="Plays an important role in substrate specificity" evidence="1">
    <location>
        <position position="228"/>
    </location>
</feature>
<feature type="modified residue" description="N6-(pyridoxal phosphate)lysine" evidence="1">
    <location>
        <position position="229"/>
    </location>
</feature>